<reference key="1">
    <citation type="journal article" date="2002" name="Proc. Natl. Acad. Sci. U.S.A.">
        <title>The chloroplast and mitochondrial genome sequences of the charophyte Chaetosphaeridium globosum: insights into the timing of the events that restructured organelle DNAs within the green algal lineage that led to land plants.</title>
        <authorList>
            <person name="Turmel M."/>
            <person name="Otis C."/>
            <person name="Lemieux C."/>
        </authorList>
    </citation>
    <scope>NUCLEOTIDE SEQUENCE [LARGE SCALE GENOMIC DNA]</scope>
    <source>
        <strain>M1311</strain>
    </source>
</reference>
<dbReference type="EMBL" id="AF494278">
    <property type="protein sequence ID" value="AAM96558.1"/>
    <property type="molecule type" value="Genomic_DNA"/>
</dbReference>
<dbReference type="RefSeq" id="NP_683849.1">
    <property type="nucleotide sequence ID" value="NC_004115.1"/>
</dbReference>
<dbReference type="SMR" id="Q8M9U4"/>
<dbReference type="GeneID" id="860714"/>
<dbReference type="GO" id="GO:0009507">
    <property type="term" value="C:chloroplast"/>
    <property type="evidence" value="ECO:0007669"/>
    <property type="project" value="UniProtKB-SubCell"/>
</dbReference>
<dbReference type="GO" id="GO:1990904">
    <property type="term" value="C:ribonucleoprotein complex"/>
    <property type="evidence" value="ECO:0007669"/>
    <property type="project" value="UniProtKB-KW"/>
</dbReference>
<dbReference type="GO" id="GO:0005840">
    <property type="term" value="C:ribosome"/>
    <property type="evidence" value="ECO:0007669"/>
    <property type="project" value="UniProtKB-KW"/>
</dbReference>
<dbReference type="GO" id="GO:0019843">
    <property type="term" value="F:rRNA binding"/>
    <property type="evidence" value="ECO:0007669"/>
    <property type="project" value="UniProtKB-UniRule"/>
</dbReference>
<dbReference type="GO" id="GO:0003735">
    <property type="term" value="F:structural constituent of ribosome"/>
    <property type="evidence" value="ECO:0007669"/>
    <property type="project" value="InterPro"/>
</dbReference>
<dbReference type="GO" id="GO:0006412">
    <property type="term" value="P:translation"/>
    <property type="evidence" value="ECO:0007669"/>
    <property type="project" value="UniProtKB-UniRule"/>
</dbReference>
<dbReference type="HAMAP" id="MF_01363">
    <property type="entry name" value="Ribosomal_bL21"/>
    <property type="match status" value="1"/>
</dbReference>
<dbReference type="InterPro" id="IPR028909">
    <property type="entry name" value="bL21-like"/>
</dbReference>
<dbReference type="InterPro" id="IPR036164">
    <property type="entry name" value="bL21-like_sf"/>
</dbReference>
<dbReference type="InterPro" id="IPR001787">
    <property type="entry name" value="Ribosomal_bL21"/>
</dbReference>
<dbReference type="NCBIfam" id="TIGR00061">
    <property type="entry name" value="L21"/>
    <property type="match status" value="1"/>
</dbReference>
<dbReference type="PANTHER" id="PTHR21349">
    <property type="entry name" value="50S RIBOSOMAL PROTEIN L21"/>
    <property type="match status" value="1"/>
</dbReference>
<dbReference type="PANTHER" id="PTHR21349:SF0">
    <property type="entry name" value="LARGE RIBOSOMAL SUBUNIT PROTEIN BL21M"/>
    <property type="match status" value="1"/>
</dbReference>
<dbReference type="Pfam" id="PF00829">
    <property type="entry name" value="Ribosomal_L21p"/>
    <property type="match status" value="1"/>
</dbReference>
<dbReference type="SUPFAM" id="SSF141091">
    <property type="entry name" value="L21p-like"/>
    <property type="match status" value="1"/>
</dbReference>
<feature type="chain" id="PRO_0000269440" description="Large ribosomal subunit protein bL21c">
    <location>
        <begin position="1"/>
        <end position="121"/>
    </location>
</feature>
<geneLocation type="chloroplast"/>
<keyword id="KW-0150">Chloroplast</keyword>
<keyword id="KW-0934">Plastid</keyword>
<keyword id="KW-0687">Ribonucleoprotein</keyword>
<keyword id="KW-0689">Ribosomal protein</keyword>
<keyword id="KW-0694">RNA-binding</keyword>
<keyword id="KW-0699">rRNA-binding</keyword>
<gene>
    <name evidence="1" type="primary">rpl21</name>
</gene>
<comment type="function">
    <text evidence="1">This protein binds to 23S rRNA.</text>
</comment>
<comment type="subunit">
    <text evidence="1">Part of the 50S ribosomal subunit.</text>
</comment>
<comment type="subcellular location">
    <subcellularLocation>
        <location>Plastid</location>
        <location>Chloroplast</location>
    </subcellularLocation>
</comment>
<comment type="similarity">
    <text evidence="1">Belongs to the bacterial ribosomal protein bL21 family.</text>
</comment>
<proteinExistence type="inferred from homology"/>
<sequence length="121" mass="14142">MSTYAIIDLGGKQLRVEPGRFYDAHLFSSFKSLLSESNTKIIIFRVLMISHGTEVQFGYPWLKNASVKARILHKKQNDKMLIYKMRSKKKTRKKFGHRQKIARFIVDAIQYNGQTFTTNLK</sequence>
<organism>
    <name type="scientific">Chaetosphaeridium globosum</name>
    <name type="common">Charophycean green alga</name>
    <name type="synonym">Herposteiron globosum</name>
    <dbReference type="NCBI Taxonomy" id="96477"/>
    <lineage>
        <taxon>Eukaryota</taxon>
        <taxon>Viridiplantae</taxon>
        <taxon>Streptophyta</taxon>
        <taxon>Coleochaetophyceae</taxon>
        <taxon>Coleochaetales</taxon>
        <taxon>Chaetosphaeridiaceae</taxon>
        <taxon>Chaetosphaeridium</taxon>
    </lineage>
</organism>
<protein>
    <recommendedName>
        <fullName evidence="1">Large ribosomal subunit protein bL21c</fullName>
    </recommendedName>
    <alternativeName>
        <fullName evidence="2">50S ribosomal protein L21, chloroplastic</fullName>
    </alternativeName>
</protein>
<accession>Q8M9U4</accession>
<evidence type="ECO:0000255" key="1">
    <source>
        <dbReference type="HAMAP-Rule" id="MF_01363"/>
    </source>
</evidence>
<evidence type="ECO:0000305" key="2"/>
<name>RK21_CHAGL</name>